<organism>
    <name type="scientific">Escherichia coli O8 (strain IAI1)</name>
    <dbReference type="NCBI Taxonomy" id="585034"/>
    <lineage>
        <taxon>Bacteria</taxon>
        <taxon>Pseudomonadati</taxon>
        <taxon>Pseudomonadota</taxon>
        <taxon>Gammaproteobacteria</taxon>
        <taxon>Enterobacterales</taxon>
        <taxon>Enterobacteriaceae</taxon>
        <taxon>Escherichia</taxon>
    </lineage>
</organism>
<accession>B7M130</accession>
<proteinExistence type="inferred from homology"/>
<evidence type="ECO:0000255" key="1">
    <source>
        <dbReference type="HAMAP-Rule" id="MF_00038"/>
    </source>
</evidence>
<gene>
    <name evidence="1" type="primary">mraY</name>
    <name type="ordered locus">ECIAI1_0086</name>
</gene>
<protein>
    <recommendedName>
        <fullName evidence="1">Phospho-N-acetylmuramoyl-pentapeptide-transferase</fullName>
        <ecNumber evidence="1">2.7.8.13</ecNumber>
    </recommendedName>
    <alternativeName>
        <fullName evidence="1">UDP-MurNAc-pentapeptide phosphotransferase</fullName>
    </alternativeName>
</protein>
<comment type="function">
    <text evidence="1">Catalyzes the initial step of the lipid cycle reactions in the biosynthesis of the cell wall peptidoglycan: transfers peptidoglycan precursor phospho-MurNAc-pentapeptide from UDP-MurNAc-pentapeptide onto the lipid carrier undecaprenyl phosphate, yielding undecaprenyl-pyrophosphoryl-MurNAc-pentapeptide, known as lipid I.</text>
</comment>
<comment type="catalytic activity">
    <reaction evidence="1">
        <text>UDP-N-acetyl-alpha-D-muramoyl-L-alanyl-gamma-D-glutamyl-meso-2,6-diaminopimeloyl-D-alanyl-D-alanine + di-trans,octa-cis-undecaprenyl phosphate = di-trans,octa-cis-undecaprenyl diphospho-N-acetyl-alpha-D-muramoyl-L-alanyl-D-glutamyl-meso-2,6-diaminopimeloyl-D-alanyl-D-alanine + UMP</text>
        <dbReference type="Rhea" id="RHEA:28386"/>
        <dbReference type="ChEBI" id="CHEBI:57865"/>
        <dbReference type="ChEBI" id="CHEBI:60392"/>
        <dbReference type="ChEBI" id="CHEBI:61386"/>
        <dbReference type="ChEBI" id="CHEBI:61387"/>
        <dbReference type="EC" id="2.7.8.13"/>
    </reaction>
</comment>
<comment type="cofactor">
    <cofactor evidence="1">
        <name>Mg(2+)</name>
        <dbReference type="ChEBI" id="CHEBI:18420"/>
    </cofactor>
</comment>
<comment type="pathway">
    <text evidence="1">Cell wall biogenesis; peptidoglycan biosynthesis.</text>
</comment>
<comment type="subcellular location">
    <subcellularLocation>
        <location evidence="1">Cell inner membrane</location>
        <topology evidence="1">Multi-pass membrane protein</topology>
    </subcellularLocation>
</comment>
<comment type="similarity">
    <text evidence="1">Belongs to the glycosyltransferase 4 family. MraY subfamily.</text>
</comment>
<feature type="chain" id="PRO_1000116514" description="Phospho-N-acetylmuramoyl-pentapeptide-transferase">
    <location>
        <begin position="1"/>
        <end position="360"/>
    </location>
</feature>
<feature type="topological domain" description="Periplasmic" evidence="1">
    <location>
        <begin position="1"/>
        <end position="25"/>
    </location>
</feature>
<feature type="transmembrane region" description="Helical" evidence="1">
    <location>
        <begin position="26"/>
        <end position="46"/>
    </location>
</feature>
<feature type="topological domain" description="Cytoplasmic" evidence="1">
    <location>
        <begin position="47"/>
        <end position="71"/>
    </location>
</feature>
<feature type="transmembrane region" description="Helical" evidence="1">
    <location>
        <begin position="72"/>
        <end position="92"/>
    </location>
</feature>
<feature type="topological domain" description="Periplasmic" evidence="1">
    <location>
        <position position="93"/>
    </location>
</feature>
<feature type="transmembrane region" description="Helical" evidence="1">
    <location>
        <begin position="94"/>
        <end position="114"/>
    </location>
</feature>
<feature type="topological domain" description="Cytoplasmic" evidence="1">
    <location>
        <begin position="115"/>
        <end position="131"/>
    </location>
</feature>
<feature type="transmembrane region" description="Helical" evidence="1">
    <location>
        <begin position="132"/>
        <end position="152"/>
    </location>
</feature>
<feature type="topological domain" description="Periplasmic" evidence="1">
    <location>
        <begin position="153"/>
        <end position="167"/>
    </location>
</feature>
<feature type="transmembrane region" description="Helical" evidence="1">
    <location>
        <begin position="168"/>
        <end position="188"/>
    </location>
</feature>
<feature type="topological domain" description="Cytoplasmic" evidence="1">
    <location>
        <begin position="189"/>
        <end position="198"/>
    </location>
</feature>
<feature type="transmembrane region" description="Helical" evidence="1">
    <location>
        <begin position="199"/>
        <end position="219"/>
    </location>
</feature>
<feature type="topological domain" description="Periplasmic" evidence="1">
    <location>
        <begin position="220"/>
        <end position="235"/>
    </location>
</feature>
<feature type="transmembrane region" description="Helical" evidence="1">
    <location>
        <begin position="236"/>
        <end position="256"/>
    </location>
</feature>
<feature type="topological domain" description="Cytoplasmic" evidence="1">
    <location>
        <begin position="257"/>
        <end position="262"/>
    </location>
</feature>
<feature type="transmembrane region" description="Helical" evidence="1">
    <location>
        <begin position="263"/>
        <end position="283"/>
    </location>
</feature>
<feature type="topological domain" description="Periplasmic" evidence="1">
    <location>
        <begin position="284"/>
        <end position="287"/>
    </location>
</feature>
<feature type="transmembrane region" description="Helical" evidence="1">
    <location>
        <begin position="288"/>
        <end position="308"/>
    </location>
</feature>
<feature type="topological domain" description="Cytoplasmic" evidence="1">
    <location>
        <begin position="309"/>
        <end position="337"/>
    </location>
</feature>
<feature type="transmembrane region" description="Helical" evidence="1">
    <location>
        <begin position="338"/>
        <end position="358"/>
    </location>
</feature>
<feature type="topological domain" description="Periplasmic" evidence="1">
    <location>
        <begin position="359"/>
        <end position="360"/>
    </location>
</feature>
<keyword id="KW-0131">Cell cycle</keyword>
<keyword id="KW-0132">Cell division</keyword>
<keyword id="KW-0997">Cell inner membrane</keyword>
<keyword id="KW-1003">Cell membrane</keyword>
<keyword id="KW-0133">Cell shape</keyword>
<keyword id="KW-0961">Cell wall biogenesis/degradation</keyword>
<keyword id="KW-0460">Magnesium</keyword>
<keyword id="KW-0472">Membrane</keyword>
<keyword id="KW-0479">Metal-binding</keyword>
<keyword id="KW-0573">Peptidoglycan synthesis</keyword>
<keyword id="KW-0808">Transferase</keyword>
<keyword id="KW-0812">Transmembrane</keyword>
<keyword id="KW-1133">Transmembrane helix</keyword>
<name>MRAY_ECO8A</name>
<sequence>MLVWLAEHLVKYYSGFNVFSYLTFRAIVSLLTALFISLWMGPRMIAHLQKLSFGQVVRNDGPESHFSKRGTPTMGGIMILTAIVISVLLWAYPSNPYVWCVLVVLVGYGVIGFVDDYRKVVRKDTKGLIARWKYFWMSVIALGVAFALYLAGKDTPATQLVVPFFKDVMPQLGLFYILLAYFVIVGTGNAVNLTDGLDGLAIMPTVFVAGGFALVAWATGNMNFASYLHIPYLRHAGELVIVCTAIVGAGLGFLWFNTYPAQVFMGDVGSLALGGALGIIAVLLRQEFLLVIMGGVFVVETLSVILQVGSFKLRGQRIFRMAPIHHHYELKGWPEPRVIVRFWIISLMLVLIGLATLKVR</sequence>
<dbReference type="EC" id="2.7.8.13" evidence="1"/>
<dbReference type="EMBL" id="CU928160">
    <property type="protein sequence ID" value="CAQ96976.1"/>
    <property type="molecule type" value="Genomic_DNA"/>
</dbReference>
<dbReference type="RefSeq" id="WP_000964131.1">
    <property type="nucleotide sequence ID" value="NC_011741.1"/>
</dbReference>
<dbReference type="SMR" id="B7M130"/>
<dbReference type="GeneID" id="93777347"/>
<dbReference type="KEGG" id="ecr:ECIAI1_0086"/>
<dbReference type="HOGENOM" id="CLU_023982_0_0_6"/>
<dbReference type="UniPathway" id="UPA00219"/>
<dbReference type="GO" id="GO:0005886">
    <property type="term" value="C:plasma membrane"/>
    <property type="evidence" value="ECO:0007669"/>
    <property type="project" value="UniProtKB-SubCell"/>
</dbReference>
<dbReference type="GO" id="GO:0046872">
    <property type="term" value="F:metal ion binding"/>
    <property type="evidence" value="ECO:0007669"/>
    <property type="project" value="UniProtKB-KW"/>
</dbReference>
<dbReference type="GO" id="GO:0008963">
    <property type="term" value="F:phospho-N-acetylmuramoyl-pentapeptide-transferase activity"/>
    <property type="evidence" value="ECO:0007669"/>
    <property type="project" value="UniProtKB-UniRule"/>
</dbReference>
<dbReference type="GO" id="GO:0051992">
    <property type="term" value="F:UDP-N-acetylmuramoyl-L-alanyl-D-glutamyl-meso-2,6-diaminopimelyl-D-alanyl-D-alanine:undecaprenyl-phosphate transferase activity"/>
    <property type="evidence" value="ECO:0007669"/>
    <property type="project" value="RHEA"/>
</dbReference>
<dbReference type="GO" id="GO:0051301">
    <property type="term" value="P:cell division"/>
    <property type="evidence" value="ECO:0007669"/>
    <property type="project" value="UniProtKB-KW"/>
</dbReference>
<dbReference type="GO" id="GO:0071555">
    <property type="term" value="P:cell wall organization"/>
    <property type="evidence" value="ECO:0007669"/>
    <property type="project" value="UniProtKB-KW"/>
</dbReference>
<dbReference type="GO" id="GO:0009252">
    <property type="term" value="P:peptidoglycan biosynthetic process"/>
    <property type="evidence" value="ECO:0007669"/>
    <property type="project" value="UniProtKB-UniRule"/>
</dbReference>
<dbReference type="GO" id="GO:0008360">
    <property type="term" value="P:regulation of cell shape"/>
    <property type="evidence" value="ECO:0007669"/>
    <property type="project" value="UniProtKB-KW"/>
</dbReference>
<dbReference type="CDD" id="cd06852">
    <property type="entry name" value="GT_MraY"/>
    <property type="match status" value="1"/>
</dbReference>
<dbReference type="HAMAP" id="MF_00038">
    <property type="entry name" value="MraY"/>
    <property type="match status" value="1"/>
</dbReference>
<dbReference type="InterPro" id="IPR000715">
    <property type="entry name" value="Glycosyl_transferase_4"/>
</dbReference>
<dbReference type="InterPro" id="IPR003524">
    <property type="entry name" value="PNAcMuramoyl-5peptid_Trfase"/>
</dbReference>
<dbReference type="InterPro" id="IPR018480">
    <property type="entry name" value="PNAcMuramoyl-5peptid_Trfase_CS"/>
</dbReference>
<dbReference type="NCBIfam" id="TIGR00445">
    <property type="entry name" value="mraY"/>
    <property type="match status" value="1"/>
</dbReference>
<dbReference type="PANTHER" id="PTHR22926">
    <property type="entry name" value="PHOSPHO-N-ACETYLMURAMOYL-PENTAPEPTIDE-TRANSFERASE"/>
    <property type="match status" value="1"/>
</dbReference>
<dbReference type="PANTHER" id="PTHR22926:SF5">
    <property type="entry name" value="PHOSPHO-N-ACETYLMURAMOYL-PENTAPEPTIDE-TRANSFERASE HOMOLOG"/>
    <property type="match status" value="1"/>
</dbReference>
<dbReference type="Pfam" id="PF00953">
    <property type="entry name" value="Glycos_transf_4"/>
    <property type="match status" value="1"/>
</dbReference>
<dbReference type="Pfam" id="PF10555">
    <property type="entry name" value="MraY_sig1"/>
    <property type="match status" value="1"/>
</dbReference>
<dbReference type="PROSITE" id="PS01347">
    <property type="entry name" value="MRAY_1"/>
    <property type="match status" value="1"/>
</dbReference>
<dbReference type="PROSITE" id="PS01348">
    <property type="entry name" value="MRAY_2"/>
    <property type="match status" value="1"/>
</dbReference>
<reference key="1">
    <citation type="journal article" date="2009" name="PLoS Genet.">
        <title>Organised genome dynamics in the Escherichia coli species results in highly diverse adaptive paths.</title>
        <authorList>
            <person name="Touchon M."/>
            <person name="Hoede C."/>
            <person name="Tenaillon O."/>
            <person name="Barbe V."/>
            <person name="Baeriswyl S."/>
            <person name="Bidet P."/>
            <person name="Bingen E."/>
            <person name="Bonacorsi S."/>
            <person name="Bouchier C."/>
            <person name="Bouvet O."/>
            <person name="Calteau A."/>
            <person name="Chiapello H."/>
            <person name="Clermont O."/>
            <person name="Cruveiller S."/>
            <person name="Danchin A."/>
            <person name="Diard M."/>
            <person name="Dossat C."/>
            <person name="Karoui M.E."/>
            <person name="Frapy E."/>
            <person name="Garry L."/>
            <person name="Ghigo J.M."/>
            <person name="Gilles A.M."/>
            <person name="Johnson J."/>
            <person name="Le Bouguenec C."/>
            <person name="Lescat M."/>
            <person name="Mangenot S."/>
            <person name="Martinez-Jehanne V."/>
            <person name="Matic I."/>
            <person name="Nassif X."/>
            <person name="Oztas S."/>
            <person name="Petit M.A."/>
            <person name="Pichon C."/>
            <person name="Rouy Z."/>
            <person name="Ruf C.S."/>
            <person name="Schneider D."/>
            <person name="Tourret J."/>
            <person name="Vacherie B."/>
            <person name="Vallenet D."/>
            <person name="Medigue C."/>
            <person name="Rocha E.P.C."/>
            <person name="Denamur E."/>
        </authorList>
    </citation>
    <scope>NUCLEOTIDE SEQUENCE [LARGE SCALE GENOMIC DNA]</scope>
    <source>
        <strain>IAI1</strain>
    </source>
</reference>